<name>TRUA_BORGP</name>
<reference key="1">
    <citation type="journal article" date="2004" name="Nucleic Acids Res.">
        <title>Comparative analysis of the Borrelia garinii genome.</title>
        <authorList>
            <person name="Gloeckner G."/>
            <person name="Lehmann R."/>
            <person name="Romualdi A."/>
            <person name="Pradella S."/>
            <person name="Schulte-Spechtel U."/>
            <person name="Schilhabel M."/>
            <person name="Wilske B."/>
            <person name="Suehnel J."/>
            <person name="Platzer M."/>
        </authorList>
    </citation>
    <scope>NUCLEOTIDE SEQUENCE [LARGE SCALE GENOMIC DNA]</scope>
    <source>
        <strain>ATCC BAA-2496 / DSM 23469 / PBi</strain>
    </source>
</reference>
<comment type="function">
    <text evidence="1">Formation of pseudouridine at positions 38, 39 and 40 in the anticodon stem and loop of transfer RNAs.</text>
</comment>
<comment type="catalytic activity">
    <reaction evidence="1">
        <text>uridine(38/39/40) in tRNA = pseudouridine(38/39/40) in tRNA</text>
        <dbReference type="Rhea" id="RHEA:22376"/>
        <dbReference type="Rhea" id="RHEA-COMP:10085"/>
        <dbReference type="Rhea" id="RHEA-COMP:10087"/>
        <dbReference type="ChEBI" id="CHEBI:65314"/>
        <dbReference type="ChEBI" id="CHEBI:65315"/>
        <dbReference type="EC" id="5.4.99.12"/>
    </reaction>
</comment>
<comment type="subunit">
    <text evidence="1">Homodimer.</text>
</comment>
<comment type="similarity">
    <text evidence="1">Belongs to the tRNA pseudouridine synthase TruA family.</text>
</comment>
<proteinExistence type="inferred from homology"/>
<feature type="chain" id="PRO_0000057342" description="tRNA pseudouridine synthase A">
    <location>
        <begin position="1"/>
        <end position="246"/>
    </location>
</feature>
<feature type="active site" description="Nucleophile" evidence="1">
    <location>
        <position position="52"/>
    </location>
</feature>
<feature type="binding site" evidence="1">
    <location>
        <position position="111"/>
    </location>
    <ligand>
        <name>substrate</name>
    </ligand>
</feature>
<evidence type="ECO:0000255" key="1">
    <source>
        <dbReference type="HAMAP-Rule" id="MF_00171"/>
    </source>
</evidence>
<sequence length="246" mass="28719">MKKILAEITYDGSIYHGFQIQPTKPTIQGEIEKALMKINKKKVKIHSSGRTDKGVHAKKQIITFDININIQLNNLKKALNAILLKNSIKILKLKYMKNSFHPRFNAQKRKYSYRILNSNNYYPWEGYQAHYVNKKLNISNLNQMAKILIGNHDFTTFSCIKDKSKSKFRHIYLAKFKKRGKYIIFEIIGSSFLWKMVRSIIGTMLDIEIKNESISTFETILKSKNRNLARTTAPANALFLDKVYYE</sequence>
<dbReference type="EC" id="5.4.99.12" evidence="1"/>
<dbReference type="EMBL" id="CP000013">
    <property type="protein sequence ID" value="AAU06871.1"/>
    <property type="molecule type" value="Genomic_DNA"/>
</dbReference>
<dbReference type="RefSeq" id="WP_011193367.1">
    <property type="nucleotide sequence ID" value="NZ_CP028872.1"/>
</dbReference>
<dbReference type="SMR" id="Q663A0"/>
<dbReference type="GeneID" id="45160811"/>
<dbReference type="KEGG" id="bga:BG0012"/>
<dbReference type="eggNOG" id="COG0101">
    <property type="taxonomic scope" value="Bacteria"/>
</dbReference>
<dbReference type="HOGENOM" id="CLU_014673_0_1_12"/>
<dbReference type="OrthoDB" id="9811823at2"/>
<dbReference type="Proteomes" id="UP000002276">
    <property type="component" value="Chromosome"/>
</dbReference>
<dbReference type="GO" id="GO:0003723">
    <property type="term" value="F:RNA binding"/>
    <property type="evidence" value="ECO:0007669"/>
    <property type="project" value="InterPro"/>
</dbReference>
<dbReference type="GO" id="GO:0160147">
    <property type="term" value="F:tRNA pseudouridine(38-40) synthase activity"/>
    <property type="evidence" value="ECO:0007669"/>
    <property type="project" value="UniProtKB-EC"/>
</dbReference>
<dbReference type="GO" id="GO:0031119">
    <property type="term" value="P:tRNA pseudouridine synthesis"/>
    <property type="evidence" value="ECO:0007669"/>
    <property type="project" value="UniProtKB-UniRule"/>
</dbReference>
<dbReference type="CDD" id="cd02570">
    <property type="entry name" value="PseudoU_synth_EcTruA"/>
    <property type="match status" value="1"/>
</dbReference>
<dbReference type="FunFam" id="3.30.70.580:FF:000001">
    <property type="entry name" value="tRNA pseudouridine synthase A"/>
    <property type="match status" value="1"/>
</dbReference>
<dbReference type="Gene3D" id="3.30.70.660">
    <property type="entry name" value="Pseudouridine synthase I, catalytic domain, C-terminal subdomain"/>
    <property type="match status" value="1"/>
</dbReference>
<dbReference type="Gene3D" id="3.30.70.580">
    <property type="entry name" value="Pseudouridine synthase I, catalytic domain, N-terminal subdomain"/>
    <property type="match status" value="1"/>
</dbReference>
<dbReference type="HAMAP" id="MF_00171">
    <property type="entry name" value="TruA"/>
    <property type="match status" value="1"/>
</dbReference>
<dbReference type="InterPro" id="IPR020103">
    <property type="entry name" value="PsdUridine_synth_cat_dom_sf"/>
</dbReference>
<dbReference type="InterPro" id="IPR001406">
    <property type="entry name" value="PsdUridine_synth_TruA"/>
</dbReference>
<dbReference type="InterPro" id="IPR020097">
    <property type="entry name" value="PsdUridine_synth_TruA_a/b_dom"/>
</dbReference>
<dbReference type="InterPro" id="IPR020095">
    <property type="entry name" value="PsdUridine_synth_TruA_C"/>
</dbReference>
<dbReference type="InterPro" id="IPR020094">
    <property type="entry name" value="TruA/RsuA/RluB/E/F_N"/>
</dbReference>
<dbReference type="NCBIfam" id="TIGR00071">
    <property type="entry name" value="hisT_truA"/>
    <property type="match status" value="1"/>
</dbReference>
<dbReference type="PANTHER" id="PTHR11142">
    <property type="entry name" value="PSEUDOURIDYLATE SYNTHASE"/>
    <property type="match status" value="1"/>
</dbReference>
<dbReference type="PANTHER" id="PTHR11142:SF0">
    <property type="entry name" value="TRNA PSEUDOURIDINE SYNTHASE-LIKE 1"/>
    <property type="match status" value="1"/>
</dbReference>
<dbReference type="Pfam" id="PF01416">
    <property type="entry name" value="PseudoU_synth_1"/>
    <property type="match status" value="2"/>
</dbReference>
<dbReference type="PIRSF" id="PIRSF001430">
    <property type="entry name" value="tRNA_psdUrid_synth"/>
    <property type="match status" value="1"/>
</dbReference>
<dbReference type="SUPFAM" id="SSF55120">
    <property type="entry name" value="Pseudouridine synthase"/>
    <property type="match status" value="1"/>
</dbReference>
<gene>
    <name evidence="1" type="primary">truA</name>
    <name type="ordered locus">BG0012</name>
</gene>
<keyword id="KW-0413">Isomerase</keyword>
<keyword id="KW-0819">tRNA processing</keyword>
<accession>Q663A0</accession>
<protein>
    <recommendedName>
        <fullName evidence="1">tRNA pseudouridine synthase A</fullName>
        <ecNumber evidence="1">5.4.99.12</ecNumber>
    </recommendedName>
    <alternativeName>
        <fullName evidence="1">tRNA pseudouridine(38-40) synthase</fullName>
    </alternativeName>
    <alternativeName>
        <fullName evidence="1">tRNA pseudouridylate synthase I</fullName>
    </alternativeName>
    <alternativeName>
        <fullName evidence="1">tRNA-uridine isomerase I</fullName>
    </alternativeName>
</protein>
<organism>
    <name type="scientific">Borrelia garinii subsp. bavariensis (strain ATCC BAA-2496 / DSM 23469 / PBi)</name>
    <name type="common">Borreliella bavariensis</name>
    <dbReference type="NCBI Taxonomy" id="290434"/>
    <lineage>
        <taxon>Bacteria</taxon>
        <taxon>Pseudomonadati</taxon>
        <taxon>Spirochaetota</taxon>
        <taxon>Spirochaetia</taxon>
        <taxon>Spirochaetales</taxon>
        <taxon>Borreliaceae</taxon>
        <taxon>Borreliella</taxon>
    </lineage>
</organism>